<accession>Q9D5J6</accession>
<accession>Q5SSE0</accession>
<proteinExistence type="evidence at protein level"/>
<sequence length="476" mass="51303">MASRPVTLGIDLGTTSVKAALLEAAPSLPSGFVVLASCARAARAETESAVAGPQGREQDVTRIIQALNECLDALPRQQLQRVRGIGVSGQMHGILFWKAGQGCEWMEGGPAFVFEPRAVSHLVTWQDGRCNSSFLASLPKPDSHLSVATGFGCATIFWLLKNSPEFLKSYDAAGTIQDYVVAMLCGLPRPLMSDQNAASWGYFNTQSQSWNLDTLEKAGFPIHLLPDIAEPGSMAGRTSHTWFEIPKGTQVGIALGDLQASVYSCMGQRTDAVLNISTSVQLAASMPVGFQPLQTPDPAAPVAFFPYFDRTYLGVAASLNGGNVLATFVHMLVQWMADLGLEVEESTVYSRMIQAAAQQKDTHLTITPTVLGERHLPDQLASVTRISSSDLSLGHVTRALCRGIVQNLHSMLPFQQLKEWGVARVVGSGSALSRNEVLKQEVQRAFPFPVCFGQDVDAAFGAALVMLQRDLSQKEP</sequence>
<comment type="function">
    <text evidence="1 2">Acts as a modulator of macrophage activation through control of glucose metabolism.</text>
</comment>
<comment type="catalytic activity">
    <reaction evidence="2">
        <text>sedoheptulose + ATP = D-sedoheptulose 7-phosphate + ADP + H(+)</text>
        <dbReference type="Rhea" id="RHEA:23844"/>
        <dbReference type="ChEBI" id="CHEBI:15378"/>
        <dbReference type="ChEBI" id="CHEBI:16802"/>
        <dbReference type="ChEBI" id="CHEBI:30616"/>
        <dbReference type="ChEBI" id="CHEBI:57483"/>
        <dbReference type="ChEBI" id="CHEBI:456216"/>
        <dbReference type="EC" id="2.7.1.14"/>
    </reaction>
</comment>
<comment type="biophysicochemical properties">
    <kinetics>
        <KM evidence="1">0.19 mM for sedoheptulose</KM>
        <Vmax evidence="1">0.128 nmol/min/mg enzyme (at 30 degrees Celsius)</Vmax>
    </kinetics>
</comment>
<comment type="subcellular location">
    <subcellularLocation>
        <location evidence="2">Cytoplasm</location>
    </subcellularLocation>
</comment>
<comment type="induction">
    <text evidence="2">Up-regulated by IL-4 and IL-13. Down-regulated by LPS.</text>
</comment>
<comment type="similarity">
    <text evidence="3">Belongs to the FGGY kinase family.</text>
</comment>
<dbReference type="EC" id="2.7.1.14"/>
<dbReference type="EMBL" id="AK015273">
    <property type="protein sequence ID" value="BAB29776.1"/>
    <property type="molecule type" value="mRNA"/>
</dbReference>
<dbReference type="EMBL" id="AL663116">
    <property type="status" value="NOT_ANNOTATED_CDS"/>
    <property type="molecule type" value="Genomic_DNA"/>
</dbReference>
<dbReference type="EMBL" id="AL670399">
    <property type="status" value="NOT_ANNOTATED_CDS"/>
    <property type="molecule type" value="Genomic_DNA"/>
</dbReference>
<dbReference type="EMBL" id="BC054721">
    <property type="protein sequence ID" value="AAH54721.1"/>
    <property type="molecule type" value="mRNA"/>
</dbReference>
<dbReference type="EMBL" id="BC056433">
    <property type="protein sequence ID" value="AAH56433.1"/>
    <property type="molecule type" value="mRNA"/>
</dbReference>
<dbReference type="CCDS" id="CCDS25002.1"/>
<dbReference type="RefSeq" id="NP_083307.1">
    <property type="nucleotide sequence ID" value="NM_029031.3"/>
</dbReference>
<dbReference type="SMR" id="Q9D5J6"/>
<dbReference type="FunCoup" id="Q9D5J6">
    <property type="interactions" value="784"/>
</dbReference>
<dbReference type="STRING" id="10090.ENSMUSP00000006105"/>
<dbReference type="iPTMnet" id="Q9D5J6"/>
<dbReference type="PhosphoSitePlus" id="Q9D5J6"/>
<dbReference type="jPOST" id="Q9D5J6"/>
<dbReference type="PaxDb" id="10090-ENSMUSP00000006105"/>
<dbReference type="PeptideAtlas" id="Q9D5J6"/>
<dbReference type="ProteomicsDB" id="257155"/>
<dbReference type="Pumba" id="Q9D5J6"/>
<dbReference type="DNASU" id="74637"/>
<dbReference type="Ensembl" id="ENSMUST00000006105.7">
    <property type="protein sequence ID" value="ENSMUSP00000006105.7"/>
    <property type="gene ID" value="ENSMUSG00000005951.14"/>
</dbReference>
<dbReference type="GeneID" id="74637"/>
<dbReference type="KEGG" id="mmu:74637"/>
<dbReference type="UCSC" id="uc007kag.1">
    <property type="organism name" value="mouse"/>
</dbReference>
<dbReference type="AGR" id="MGI:1921887"/>
<dbReference type="CTD" id="23729"/>
<dbReference type="MGI" id="MGI:1921887">
    <property type="gene designation" value="Shpk"/>
</dbReference>
<dbReference type="VEuPathDB" id="HostDB:ENSMUSG00000005951"/>
<dbReference type="eggNOG" id="KOG2517">
    <property type="taxonomic scope" value="Eukaryota"/>
</dbReference>
<dbReference type="GeneTree" id="ENSGT01000000214434"/>
<dbReference type="HOGENOM" id="CLU_021676_1_1_1"/>
<dbReference type="InParanoid" id="Q9D5J6"/>
<dbReference type="OMA" id="TWQDTRC"/>
<dbReference type="OrthoDB" id="10264182at2759"/>
<dbReference type="PhylomeDB" id="Q9D5J6"/>
<dbReference type="TreeFam" id="TF315140"/>
<dbReference type="BRENDA" id="2.7.1.14">
    <property type="organism ID" value="3474"/>
</dbReference>
<dbReference type="Reactome" id="R-MMU-71336">
    <property type="pathway name" value="Pentose phosphate pathway"/>
</dbReference>
<dbReference type="SABIO-RK" id="Q9D5J6"/>
<dbReference type="BioGRID-ORCS" id="74637">
    <property type="hits" value="4 hits in 76 CRISPR screens"/>
</dbReference>
<dbReference type="PRO" id="PR:Q9D5J6"/>
<dbReference type="Proteomes" id="UP000000589">
    <property type="component" value="Chromosome 11"/>
</dbReference>
<dbReference type="RNAct" id="Q9D5J6">
    <property type="molecule type" value="protein"/>
</dbReference>
<dbReference type="Bgee" id="ENSMUSG00000005951">
    <property type="expression patterns" value="Expressed in right kidney and 92 other cell types or tissues"/>
</dbReference>
<dbReference type="ExpressionAtlas" id="Q9D5J6">
    <property type="expression patterns" value="baseline and differential"/>
</dbReference>
<dbReference type="GO" id="GO:0005737">
    <property type="term" value="C:cytoplasm"/>
    <property type="evidence" value="ECO:0000314"/>
    <property type="project" value="UniProtKB"/>
</dbReference>
<dbReference type="GO" id="GO:0005524">
    <property type="term" value="F:ATP binding"/>
    <property type="evidence" value="ECO:0007669"/>
    <property type="project" value="UniProtKB-KW"/>
</dbReference>
<dbReference type="GO" id="GO:0050277">
    <property type="term" value="F:sedoheptulokinase activity"/>
    <property type="evidence" value="ECO:0000314"/>
    <property type="project" value="UniProtKB"/>
</dbReference>
<dbReference type="GO" id="GO:0005975">
    <property type="term" value="P:carbohydrate metabolic process"/>
    <property type="evidence" value="ECO:0000314"/>
    <property type="project" value="UniProtKB"/>
</dbReference>
<dbReference type="GO" id="GO:0035963">
    <property type="term" value="P:cellular response to interleukin-13"/>
    <property type="evidence" value="ECO:0000314"/>
    <property type="project" value="UniProtKB"/>
</dbReference>
<dbReference type="GO" id="GO:0071353">
    <property type="term" value="P:cellular response to interleukin-4"/>
    <property type="evidence" value="ECO:0000314"/>
    <property type="project" value="UniProtKB"/>
</dbReference>
<dbReference type="GO" id="GO:0071222">
    <property type="term" value="P:cellular response to lipopolysaccharide"/>
    <property type="evidence" value="ECO:0000314"/>
    <property type="project" value="UniProtKB"/>
</dbReference>
<dbReference type="GO" id="GO:0009052">
    <property type="term" value="P:pentose-phosphate shunt, non-oxidative branch"/>
    <property type="evidence" value="ECO:0000314"/>
    <property type="project" value="UniProtKB"/>
</dbReference>
<dbReference type="GO" id="GO:0016310">
    <property type="term" value="P:phosphorylation"/>
    <property type="evidence" value="ECO:0000314"/>
    <property type="project" value="UniProtKB"/>
</dbReference>
<dbReference type="GO" id="GO:0050727">
    <property type="term" value="P:regulation of inflammatory response"/>
    <property type="evidence" value="ECO:0000314"/>
    <property type="project" value="UniProtKB"/>
</dbReference>
<dbReference type="GO" id="GO:0043030">
    <property type="term" value="P:regulation of macrophage activation"/>
    <property type="evidence" value="ECO:0000314"/>
    <property type="project" value="UniProtKB"/>
</dbReference>
<dbReference type="CDD" id="cd07777">
    <property type="entry name" value="ASKHA_NBD_FGGY_SHK"/>
    <property type="match status" value="1"/>
</dbReference>
<dbReference type="FunFam" id="3.30.420.40:FF:000111">
    <property type="entry name" value="Sedoheptulokinase"/>
    <property type="match status" value="1"/>
</dbReference>
<dbReference type="FunFam" id="3.30.420.40:FF:000132">
    <property type="entry name" value="Sedoheptulokinase"/>
    <property type="match status" value="1"/>
</dbReference>
<dbReference type="Gene3D" id="3.30.420.40">
    <property type="match status" value="2"/>
</dbReference>
<dbReference type="InterPro" id="IPR043129">
    <property type="entry name" value="ATPase_NBD"/>
</dbReference>
<dbReference type="InterPro" id="IPR018484">
    <property type="entry name" value="FGGY_N"/>
</dbReference>
<dbReference type="PANTHER" id="PTHR10196:SF67">
    <property type="entry name" value="SEDOHEPTULOKINASE"/>
    <property type="match status" value="1"/>
</dbReference>
<dbReference type="PANTHER" id="PTHR10196">
    <property type="entry name" value="SUGAR KINASE"/>
    <property type="match status" value="1"/>
</dbReference>
<dbReference type="Pfam" id="PF00370">
    <property type="entry name" value="FGGY_N"/>
    <property type="match status" value="1"/>
</dbReference>
<dbReference type="SUPFAM" id="SSF53067">
    <property type="entry name" value="Actin-like ATPase domain"/>
    <property type="match status" value="2"/>
</dbReference>
<organism>
    <name type="scientific">Mus musculus</name>
    <name type="common">Mouse</name>
    <dbReference type="NCBI Taxonomy" id="10090"/>
    <lineage>
        <taxon>Eukaryota</taxon>
        <taxon>Metazoa</taxon>
        <taxon>Chordata</taxon>
        <taxon>Craniata</taxon>
        <taxon>Vertebrata</taxon>
        <taxon>Euteleostomi</taxon>
        <taxon>Mammalia</taxon>
        <taxon>Eutheria</taxon>
        <taxon>Euarchontoglires</taxon>
        <taxon>Glires</taxon>
        <taxon>Rodentia</taxon>
        <taxon>Myomorpha</taxon>
        <taxon>Muroidea</taxon>
        <taxon>Muridae</taxon>
        <taxon>Murinae</taxon>
        <taxon>Mus</taxon>
        <taxon>Mus</taxon>
    </lineage>
</organism>
<reference key="1">
    <citation type="journal article" date="2005" name="Science">
        <title>The transcriptional landscape of the mammalian genome.</title>
        <authorList>
            <person name="Carninci P."/>
            <person name="Kasukawa T."/>
            <person name="Katayama S."/>
            <person name="Gough J."/>
            <person name="Frith M.C."/>
            <person name="Maeda N."/>
            <person name="Oyama R."/>
            <person name="Ravasi T."/>
            <person name="Lenhard B."/>
            <person name="Wells C."/>
            <person name="Kodzius R."/>
            <person name="Shimokawa K."/>
            <person name="Bajic V.B."/>
            <person name="Brenner S.E."/>
            <person name="Batalov S."/>
            <person name="Forrest A.R."/>
            <person name="Zavolan M."/>
            <person name="Davis M.J."/>
            <person name="Wilming L.G."/>
            <person name="Aidinis V."/>
            <person name="Allen J.E."/>
            <person name="Ambesi-Impiombato A."/>
            <person name="Apweiler R."/>
            <person name="Aturaliya R.N."/>
            <person name="Bailey T.L."/>
            <person name="Bansal M."/>
            <person name="Baxter L."/>
            <person name="Beisel K.W."/>
            <person name="Bersano T."/>
            <person name="Bono H."/>
            <person name="Chalk A.M."/>
            <person name="Chiu K.P."/>
            <person name="Choudhary V."/>
            <person name="Christoffels A."/>
            <person name="Clutterbuck D.R."/>
            <person name="Crowe M.L."/>
            <person name="Dalla E."/>
            <person name="Dalrymple B.P."/>
            <person name="de Bono B."/>
            <person name="Della Gatta G."/>
            <person name="di Bernardo D."/>
            <person name="Down T."/>
            <person name="Engstrom P."/>
            <person name="Fagiolini M."/>
            <person name="Faulkner G."/>
            <person name="Fletcher C.F."/>
            <person name="Fukushima T."/>
            <person name="Furuno M."/>
            <person name="Futaki S."/>
            <person name="Gariboldi M."/>
            <person name="Georgii-Hemming P."/>
            <person name="Gingeras T.R."/>
            <person name="Gojobori T."/>
            <person name="Green R.E."/>
            <person name="Gustincich S."/>
            <person name="Harbers M."/>
            <person name="Hayashi Y."/>
            <person name="Hensch T.K."/>
            <person name="Hirokawa N."/>
            <person name="Hill D."/>
            <person name="Huminiecki L."/>
            <person name="Iacono M."/>
            <person name="Ikeo K."/>
            <person name="Iwama A."/>
            <person name="Ishikawa T."/>
            <person name="Jakt M."/>
            <person name="Kanapin A."/>
            <person name="Katoh M."/>
            <person name="Kawasawa Y."/>
            <person name="Kelso J."/>
            <person name="Kitamura H."/>
            <person name="Kitano H."/>
            <person name="Kollias G."/>
            <person name="Krishnan S.P."/>
            <person name="Kruger A."/>
            <person name="Kummerfeld S.K."/>
            <person name="Kurochkin I.V."/>
            <person name="Lareau L.F."/>
            <person name="Lazarevic D."/>
            <person name="Lipovich L."/>
            <person name="Liu J."/>
            <person name="Liuni S."/>
            <person name="McWilliam S."/>
            <person name="Madan Babu M."/>
            <person name="Madera M."/>
            <person name="Marchionni L."/>
            <person name="Matsuda H."/>
            <person name="Matsuzawa S."/>
            <person name="Miki H."/>
            <person name="Mignone F."/>
            <person name="Miyake S."/>
            <person name="Morris K."/>
            <person name="Mottagui-Tabar S."/>
            <person name="Mulder N."/>
            <person name="Nakano N."/>
            <person name="Nakauchi H."/>
            <person name="Ng P."/>
            <person name="Nilsson R."/>
            <person name="Nishiguchi S."/>
            <person name="Nishikawa S."/>
            <person name="Nori F."/>
            <person name="Ohara O."/>
            <person name="Okazaki Y."/>
            <person name="Orlando V."/>
            <person name="Pang K.C."/>
            <person name="Pavan W.J."/>
            <person name="Pavesi G."/>
            <person name="Pesole G."/>
            <person name="Petrovsky N."/>
            <person name="Piazza S."/>
            <person name="Reed J."/>
            <person name="Reid J.F."/>
            <person name="Ring B.Z."/>
            <person name="Ringwald M."/>
            <person name="Rost B."/>
            <person name="Ruan Y."/>
            <person name="Salzberg S.L."/>
            <person name="Sandelin A."/>
            <person name="Schneider C."/>
            <person name="Schoenbach C."/>
            <person name="Sekiguchi K."/>
            <person name="Semple C.A."/>
            <person name="Seno S."/>
            <person name="Sessa L."/>
            <person name="Sheng Y."/>
            <person name="Shibata Y."/>
            <person name="Shimada H."/>
            <person name="Shimada K."/>
            <person name="Silva D."/>
            <person name="Sinclair B."/>
            <person name="Sperling S."/>
            <person name="Stupka E."/>
            <person name="Sugiura K."/>
            <person name="Sultana R."/>
            <person name="Takenaka Y."/>
            <person name="Taki K."/>
            <person name="Tammoja K."/>
            <person name="Tan S.L."/>
            <person name="Tang S."/>
            <person name="Taylor M.S."/>
            <person name="Tegner J."/>
            <person name="Teichmann S.A."/>
            <person name="Ueda H.R."/>
            <person name="van Nimwegen E."/>
            <person name="Verardo R."/>
            <person name="Wei C.L."/>
            <person name="Yagi K."/>
            <person name="Yamanishi H."/>
            <person name="Zabarovsky E."/>
            <person name="Zhu S."/>
            <person name="Zimmer A."/>
            <person name="Hide W."/>
            <person name="Bult C."/>
            <person name="Grimmond S.M."/>
            <person name="Teasdale R.D."/>
            <person name="Liu E.T."/>
            <person name="Brusic V."/>
            <person name="Quackenbush J."/>
            <person name="Wahlestedt C."/>
            <person name="Mattick J.S."/>
            <person name="Hume D.A."/>
            <person name="Kai C."/>
            <person name="Sasaki D."/>
            <person name="Tomaru Y."/>
            <person name="Fukuda S."/>
            <person name="Kanamori-Katayama M."/>
            <person name="Suzuki M."/>
            <person name="Aoki J."/>
            <person name="Arakawa T."/>
            <person name="Iida J."/>
            <person name="Imamura K."/>
            <person name="Itoh M."/>
            <person name="Kato T."/>
            <person name="Kawaji H."/>
            <person name="Kawagashira N."/>
            <person name="Kawashima T."/>
            <person name="Kojima M."/>
            <person name="Kondo S."/>
            <person name="Konno H."/>
            <person name="Nakano K."/>
            <person name="Ninomiya N."/>
            <person name="Nishio T."/>
            <person name="Okada M."/>
            <person name="Plessy C."/>
            <person name="Shibata K."/>
            <person name="Shiraki T."/>
            <person name="Suzuki S."/>
            <person name="Tagami M."/>
            <person name="Waki K."/>
            <person name="Watahiki A."/>
            <person name="Okamura-Oho Y."/>
            <person name="Suzuki H."/>
            <person name="Kawai J."/>
            <person name="Hayashizaki Y."/>
        </authorList>
    </citation>
    <scope>NUCLEOTIDE SEQUENCE [LARGE SCALE MRNA]</scope>
    <source>
        <strain>C57BL/6J</strain>
        <tissue>Testis</tissue>
    </source>
</reference>
<reference key="2">
    <citation type="journal article" date="2009" name="PLoS Biol.">
        <title>Lineage-specific biology revealed by a finished genome assembly of the mouse.</title>
        <authorList>
            <person name="Church D.M."/>
            <person name="Goodstadt L."/>
            <person name="Hillier L.W."/>
            <person name="Zody M.C."/>
            <person name="Goldstein S."/>
            <person name="She X."/>
            <person name="Bult C.J."/>
            <person name="Agarwala R."/>
            <person name="Cherry J.L."/>
            <person name="DiCuccio M."/>
            <person name="Hlavina W."/>
            <person name="Kapustin Y."/>
            <person name="Meric P."/>
            <person name="Maglott D."/>
            <person name="Birtle Z."/>
            <person name="Marques A.C."/>
            <person name="Graves T."/>
            <person name="Zhou S."/>
            <person name="Teague B."/>
            <person name="Potamousis K."/>
            <person name="Churas C."/>
            <person name="Place M."/>
            <person name="Herschleb J."/>
            <person name="Runnheim R."/>
            <person name="Forrest D."/>
            <person name="Amos-Landgraf J."/>
            <person name="Schwartz D.C."/>
            <person name="Cheng Z."/>
            <person name="Lindblad-Toh K."/>
            <person name="Eichler E.E."/>
            <person name="Ponting C.P."/>
        </authorList>
    </citation>
    <scope>NUCLEOTIDE SEQUENCE [LARGE SCALE GENOMIC DNA]</scope>
    <source>
        <strain>C57BL/6J</strain>
    </source>
</reference>
<reference key="3">
    <citation type="journal article" date="2004" name="Genome Res.">
        <title>The status, quality, and expansion of the NIH full-length cDNA project: the Mammalian Gene Collection (MGC).</title>
        <authorList>
            <consortium name="The MGC Project Team"/>
        </authorList>
    </citation>
    <scope>NUCLEOTIDE SEQUENCE [LARGE SCALE MRNA]</scope>
    <source>
        <strain>C57BL/6J</strain>
        <tissue>Brain</tissue>
    </source>
</reference>
<reference key="4">
    <citation type="journal article" date="2008" name="FEBS Lett.">
        <title>Characterization of mammalian sedoheptulokinase and mechanism of formation of erythritol in sedoheptulokinase deficiency.</title>
        <authorList>
            <person name="Kardon T."/>
            <person name="Stroobant V."/>
            <person name="Veiga-da-Cunha M."/>
            <person name="Schaftingen E.V."/>
        </authorList>
    </citation>
    <scope>FUNCTION</scope>
    <scope>BIOPHYSICOCHEMICAL PROPERTIES</scope>
</reference>
<reference key="5">
    <citation type="journal article" date="2010" name="Cell">
        <title>A tissue-specific atlas of mouse protein phosphorylation and expression.</title>
        <authorList>
            <person name="Huttlin E.L."/>
            <person name="Jedrychowski M.P."/>
            <person name="Elias J.E."/>
            <person name="Goswami T."/>
            <person name="Rad R."/>
            <person name="Beausoleil S.A."/>
            <person name="Villen J."/>
            <person name="Haas W."/>
            <person name="Sowa M.E."/>
            <person name="Gygi S.P."/>
        </authorList>
    </citation>
    <scope>IDENTIFICATION BY MASS SPECTROMETRY [LARGE SCALE ANALYSIS]</scope>
    <source>
        <tissue>Brown adipose tissue</tissue>
        <tissue>Kidney</tissue>
        <tissue>Liver</tissue>
    </source>
</reference>
<reference key="6">
    <citation type="journal article" date="2012" name="Cell Metab.">
        <title>The sedoheptulose kinase CARKL directs macrophage polarization through control of glucose metabolism.</title>
        <authorList>
            <person name="Haschemi A."/>
            <person name="Kosma P."/>
            <person name="Gille L."/>
            <person name="Evans C.R."/>
            <person name="Burant C.F."/>
            <person name="Starkl P."/>
            <person name="Knapp B."/>
            <person name="Haas R."/>
            <person name="Schmid J.A."/>
            <person name="Jandl C."/>
            <person name="Amir S."/>
            <person name="Lubec G."/>
            <person name="Park J."/>
            <person name="Esterbauer H."/>
            <person name="Bilban M."/>
            <person name="Brizuela L."/>
            <person name="Pospisilik J.A."/>
            <person name="Otterbein L.E."/>
            <person name="Wagner O."/>
        </authorList>
    </citation>
    <scope>FUNCTION</scope>
    <scope>CATALYTIC ACTIVITY</scope>
    <scope>SUBCELLULAR LOCATION</scope>
    <scope>MUTAGENESIS OF THR-14; THR-15; TRP-125 AND GLN-126</scope>
    <scope>INDUCTION</scope>
</reference>
<keyword id="KW-0067">ATP-binding</keyword>
<keyword id="KW-0963">Cytoplasm</keyword>
<keyword id="KW-0418">Kinase</keyword>
<keyword id="KW-0547">Nucleotide-binding</keyword>
<keyword id="KW-1185">Reference proteome</keyword>
<keyword id="KW-0808">Transferase</keyword>
<gene>
    <name type="primary">Shpk</name>
    <name type="synonym">Carkl</name>
</gene>
<evidence type="ECO:0000269" key="1">
    <source>
    </source>
</evidence>
<evidence type="ECO:0000269" key="2">
    <source>
    </source>
</evidence>
<evidence type="ECO:0000305" key="3"/>
<feature type="chain" id="PRO_0000059565" description="Sedoheptulokinase">
    <location>
        <begin position="1"/>
        <end position="476"/>
    </location>
</feature>
<feature type="mutagenesis site" description="Decreases sedoheptulose kinase activity; when associated with K-15." evidence="2">
    <original>T</original>
    <variation>M</variation>
    <location>
        <position position="14"/>
    </location>
</feature>
<feature type="mutagenesis site" description="Decreases sedoheptulose kinase activity; when associated with M-14." evidence="2">
    <original>T</original>
    <variation>K</variation>
    <location>
        <position position="15"/>
    </location>
</feature>
<feature type="mutagenesis site" description="Decreases sedoheptulose kinase activity." evidence="2">
    <original>W</original>
    <variation>D</variation>
    <location>
        <position position="125"/>
    </location>
</feature>
<feature type="mutagenesis site" description="Decreases sedoheptulose kinase activity." evidence="2">
    <original>Q</original>
    <variation>K</variation>
    <location>
        <position position="126"/>
    </location>
</feature>
<name>SHPK_MOUSE</name>
<protein>
    <recommendedName>
        <fullName>Sedoheptulokinase</fullName>
        <shortName>SHK</shortName>
        <ecNumber>2.7.1.14</ecNumber>
    </recommendedName>
    <alternativeName>
        <fullName>Carbohydrate kinase-like protein</fullName>
    </alternativeName>
</protein>